<gene>
    <name evidence="1" type="primary">rplK</name>
    <name type="ordered locus">Bcep1808_0318</name>
</gene>
<protein>
    <recommendedName>
        <fullName evidence="1">Large ribosomal subunit protein uL11</fullName>
    </recommendedName>
    <alternativeName>
        <fullName evidence="2">50S ribosomal protein L11</fullName>
    </alternativeName>
</protein>
<feature type="chain" id="PRO_1000046156" description="Large ribosomal subunit protein uL11">
    <location>
        <begin position="1"/>
        <end position="143"/>
    </location>
</feature>
<name>RL11_BURVG</name>
<dbReference type="EMBL" id="CP000614">
    <property type="protein sequence ID" value="ABO53331.1"/>
    <property type="molecule type" value="Genomic_DNA"/>
</dbReference>
<dbReference type="SMR" id="A4JAM8"/>
<dbReference type="KEGG" id="bvi:Bcep1808_0318"/>
<dbReference type="eggNOG" id="COG0080">
    <property type="taxonomic scope" value="Bacteria"/>
</dbReference>
<dbReference type="HOGENOM" id="CLU_074237_2_0_4"/>
<dbReference type="Proteomes" id="UP000002287">
    <property type="component" value="Chromosome 1"/>
</dbReference>
<dbReference type="GO" id="GO:0022625">
    <property type="term" value="C:cytosolic large ribosomal subunit"/>
    <property type="evidence" value="ECO:0007669"/>
    <property type="project" value="TreeGrafter"/>
</dbReference>
<dbReference type="GO" id="GO:0070180">
    <property type="term" value="F:large ribosomal subunit rRNA binding"/>
    <property type="evidence" value="ECO:0007669"/>
    <property type="project" value="UniProtKB-UniRule"/>
</dbReference>
<dbReference type="GO" id="GO:0003735">
    <property type="term" value="F:structural constituent of ribosome"/>
    <property type="evidence" value="ECO:0007669"/>
    <property type="project" value="InterPro"/>
</dbReference>
<dbReference type="GO" id="GO:0006412">
    <property type="term" value="P:translation"/>
    <property type="evidence" value="ECO:0007669"/>
    <property type="project" value="UniProtKB-UniRule"/>
</dbReference>
<dbReference type="CDD" id="cd00349">
    <property type="entry name" value="Ribosomal_L11"/>
    <property type="match status" value="1"/>
</dbReference>
<dbReference type="FunFam" id="1.10.10.250:FF:000001">
    <property type="entry name" value="50S ribosomal protein L11"/>
    <property type="match status" value="1"/>
</dbReference>
<dbReference type="FunFam" id="3.30.1550.10:FF:000001">
    <property type="entry name" value="50S ribosomal protein L11"/>
    <property type="match status" value="1"/>
</dbReference>
<dbReference type="Gene3D" id="1.10.10.250">
    <property type="entry name" value="Ribosomal protein L11, C-terminal domain"/>
    <property type="match status" value="1"/>
</dbReference>
<dbReference type="Gene3D" id="3.30.1550.10">
    <property type="entry name" value="Ribosomal protein L11/L12, N-terminal domain"/>
    <property type="match status" value="1"/>
</dbReference>
<dbReference type="HAMAP" id="MF_00736">
    <property type="entry name" value="Ribosomal_uL11"/>
    <property type="match status" value="1"/>
</dbReference>
<dbReference type="InterPro" id="IPR000911">
    <property type="entry name" value="Ribosomal_uL11"/>
</dbReference>
<dbReference type="InterPro" id="IPR006519">
    <property type="entry name" value="Ribosomal_uL11_bac-typ"/>
</dbReference>
<dbReference type="InterPro" id="IPR020783">
    <property type="entry name" value="Ribosomal_uL11_C"/>
</dbReference>
<dbReference type="InterPro" id="IPR036769">
    <property type="entry name" value="Ribosomal_uL11_C_sf"/>
</dbReference>
<dbReference type="InterPro" id="IPR020785">
    <property type="entry name" value="Ribosomal_uL11_CS"/>
</dbReference>
<dbReference type="InterPro" id="IPR020784">
    <property type="entry name" value="Ribosomal_uL11_N"/>
</dbReference>
<dbReference type="InterPro" id="IPR036796">
    <property type="entry name" value="Ribosomal_uL11_N_sf"/>
</dbReference>
<dbReference type="NCBIfam" id="TIGR01632">
    <property type="entry name" value="L11_bact"/>
    <property type="match status" value="1"/>
</dbReference>
<dbReference type="PANTHER" id="PTHR11661">
    <property type="entry name" value="60S RIBOSOMAL PROTEIN L12"/>
    <property type="match status" value="1"/>
</dbReference>
<dbReference type="PANTHER" id="PTHR11661:SF1">
    <property type="entry name" value="LARGE RIBOSOMAL SUBUNIT PROTEIN UL11M"/>
    <property type="match status" value="1"/>
</dbReference>
<dbReference type="Pfam" id="PF00298">
    <property type="entry name" value="Ribosomal_L11"/>
    <property type="match status" value="1"/>
</dbReference>
<dbReference type="Pfam" id="PF03946">
    <property type="entry name" value="Ribosomal_L11_N"/>
    <property type="match status" value="1"/>
</dbReference>
<dbReference type="SMART" id="SM00649">
    <property type="entry name" value="RL11"/>
    <property type="match status" value="1"/>
</dbReference>
<dbReference type="SUPFAM" id="SSF54747">
    <property type="entry name" value="Ribosomal L11/L12e N-terminal domain"/>
    <property type="match status" value="1"/>
</dbReference>
<dbReference type="SUPFAM" id="SSF46906">
    <property type="entry name" value="Ribosomal protein L11, C-terminal domain"/>
    <property type="match status" value="1"/>
</dbReference>
<dbReference type="PROSITE" id="PS00359">
    <property type="entry name" value="RIBOSOMAL_L11"/>
    <property type="match status" value="1"/>
</dbReference>
<proteinExistence type="inferred from homology"/>
<comment type="function">
    <text evidence="1">Forms part of the ribosomal stalk which helps the ribosome interact with GTP-bound translation factors.</text>
</comment>
<comment type="subunit">
    <text evidence="1">Part of the ribosomal stalk of the 50S ribosomal subunit. Interacts with L10 and the large rRNA to form the base of the stalk. L10 forms an elongated spine to which L12 dimers bind in a sequential fashion forming a multimeric L10(L12)X complex.</text>
</comment>
<comment type="PTM">
    <text evidence="1">One or more lysine residues are methylated.</text>
</comment>
<comment type="similarity">
    <text evidence="1">Belongs to the universal ribosomal protein uL11 family.</text>
</comment>
<accession>A4JAM8</accession>
<evidence type="ECO:0000255" key="1">
    <source>
        <dbReference type="HAMAP-Rule" id="MF_00736"/>
    </source>
</evidence>
<evidence type="ECO:0000305" key="2"/>
<organism>
    <name type="scientific">Burkholderia vietnamiensis (strain G4 / LMG 22486)</name>
    <name type="common">Burkholderia cepacia (strain R1808)</name>
    <dbReference type="NCBI Taxonomy" id="269482"/>
    <lineage>
        <taxon>Bacteria</taxon>
        <taxon>Pseudomonadati</taxon>
        <taxon>Pseudomonadota</taxon>
        <taxon>Betaproteobacteria</taxon>
        <taxon>Burkholderiales</taxon>
        <taxon>Burkholderiaceae</taxon>
        <taxon>Burkholderia</taxon>
        <taxon>Burkholderia cepacia complex</taxon>
    </lineage>
</organism>
<reference key="1">
    <citation type="submission" date="2007-03" db="EMBL/GenBank/DDBJ databases">
        <title>Complete sequence of chromosome 1 of Burkholderia vietnamiensis G4.</title>
        <authorList>
            <consortium name="US DOE Joint Genome Institute"/>
            <person name="Copeland A."/>
            <person name="Lucas S."/>
            <person name="Lapidus A."/>
            <person name="Barry K."/>
            <person name="Detter J.C."/>
            <person name="Glavina del Rio T."/>
            <person name="Hammon N."/>
            <person name="Israni S."/>
            <person name="Dalin E."/>
            <person name="Tice H."/>
            <person name="Pitluck S."/>
            <person name="Chain P."/>
            <person name="Malfatti S."/>
            <person name="Shin M."/>
            <person name="Vergez L."/>
            <person name="Schmutz J."/>
            <person name="Larimer F."/>
            <person name="Land M."/>
            <person name="Hauser L."/>
            <person name="Kyrpides N."/>
            <person name="Tiedje J."/>
            <person name="Richardson P."/>
        </authorList>
    </citation>
    <scope>NUCLEOTIDE SEQUENCE [LARGE SCALE GENOMIC DNA]</scope>
    <source>
        <strain>G4 / LMG 22486</strain>
    </source>
</reference>
<sequence length="143" mass="14902">MAKKIVGFIKLQIPAGKANPSPPVGPALGQRGLNIMEFCKAFNAQTQGMEPGLPVPVVITAFADKSFTFVMKTPPATVLIKKAAKVDKGSSKPHTDKVGSITRAQAEEIAKTKMPDLTAADLDAAVRTIAGSARSMGITVEGV</sequence>
<keyword id="KW-0488">Methylation</keyword>
<keyword id="KW-0687">Ribonucleoprotein</keyword>
<keyword id="KW-0689">Ribosomal protein</keyword>
<keyword id="KW-0694">RNA-binding</keyword>
<keyword id="KW-0699">rRNA-binding</keyword>